<sequence length="273" mass="29295">MLSKFTAILLAVHIALFACALTQAEKRHKLTRPAFHPNAPYLAGKRIVGGFVIDISDAPYQISLQYNGKHHCGGSILNSKWILTAAHCIDLYSEVKPTVRVGSSEHAAGGTVLHLLRIVPHPGHSSGGNNYDIALLELECELTFNDNVQPVQLPEQDDPIDEGTMGIVSGWGMTMSAADLNAILRATNVPTVNQQECNQAYQSYGGVAEQMFCAGYKQGGTGTCRNDSGGPFVAEGKLIGVVSWSHECALAGYPGVYARVASVRDWIRETSGV</sequence>
<organism>
    <name type="scientific">Anopheles gambiae</name>
    <name type="common">African malaria mosquito</name>
    <dbReference type="NCBI Taxonomy" id="7165"/>
    <lineage>
        <taxon>Eukaryota</taxon>
        <taxon>Metazoa</taxon>
        <taxon>Ecdysozoa</taxon>
        <taxon>Arthropoda</taxon>
        <taxon>Hexapoda</taxon>
        <taxon>Insecta</taxon>
        <taxon>Pterygota</taxon>
        <taxon>Neoptera</taxon>
        <taxon>Endopterygota</taxon>
        <taxon>Diptera</taxon>
        <taxon>Nematocera</taxon>
        <taxon>Culicoidea</taxon>
        <taxon>Culicidae</taxon>
        <taxon>Anophelinae</taxon>
        <taxon>Anopheles</taxon>
    </lineage>
</organism>
<name>TRY6_ANOGA</name>
<comment type="function">
    <text evidence="4">Constitutive trypsin that is expressed 2 days after emergence, coinciding with host seeking behavior of the female.</text>
</comment>
<comment type="catalytic activity">
    <reaction>
        <text>Preferential cleavage: Arg-|-Xaa, Lys-|-Xaa.</text>
        <dbReference type="EC" id="3.4.21.4"/>
    </reaction>
</comment>
<comment type="subcellular location">
    <subcellularLocation>
        <location evidence="4">Secreted</location>
    </subcellularLocation>
</comment>
<comment type="tissue specificity">
    <text evidence="4">Expressed in the midgut. Expression levels drop a few hours after blood feeding and pick up again 28 hours later.</text>
</comment>
<comment type="similarity">
    <text evidence="3">Belongs to the peptidase S1 family.</text>
</comment>
<comment type="caution">
    <text evidence="5">As this protein has Gly-222 in the position that determines the specificity of the enzyme instead of the Asp found in trypsins, it could have a chymotrypsin-like activity.</text>
</comment>
<feature type="signal peptide" evidence="2">
    <location>
        <begin position="1"/>
        <end position="22"/>
    </location>
</feature>
<feature type="propeptide" id="PRO_0000028253" description="Activation peptide">
    <location>
        <begin position="23"/>
        <end position="46"/>
    </location>
</feature>
<feature type="chain" id="PRO_0000028254" description="Trypsin-6">
    <location>
        <begin position="47"/>
        <end position="273"/>
    </location>
</feature>
<feature type="domain" description="Peptidase S1" evidence="3">
    <location>
        <begin position="47"/>
        <end position="272"/>
    </location>
</feature>
<feature type="active site" description="Charge relay system" evidence="1">
    <location>
        <position position="87"/>
    </location>
</feature>
<feature type="active site" description="Charge relay system" evidence="1">
    <location>
        <position position="132"/>
    </location>
</feature>
<feature type="active site" description="Charge relay system" evidence="1">
    <location>
        <position position="228"/>
    </location>
</feature>
<feature type="site" description="Required for specificity" evidence="1">
    <location>
        <position position="222"/>
    </location>
</feature>
<feature type="disulfide bond" evidence="3">
    <location>
        <begin position="72"/>
        <end position="88"/>
    </location>
</feature>
<feature type="disulfide bond" evidence="3">
    <location>
        <begin position="197"/>
        <end position="213"/>
    </location>
</feature>
<feature type="disulfide bond" evidence="3">
    <location>
        <begin position="224"/>
        <end position="248"/>
    </location>
</feature>
<feature type="sequence conflict" description="In Ref. 1; CAA80513." evidence="5" ref="1">
    <original>H</original>
    <variation>L</variation>
    <location>
        <position position="13"/>
    </location>
</feature>
<feature type="sequence conflict" description="In Ref. 1; CAA80513." evidence="5" ref="1">
    <original>K</original>
    <variation>R</variation>
    <location>
        <position position="45"/>
    </location>
</feature>
<feature type="sequence conflict" description="In Ref. 1; CAA80513." evidence="5" ref="1">
    <original>S</original>
    <variation>A</variation>
    <location>
        <position position="56"/>
    </location>
</feature>
<feature type="sequence conflict" description="In Ref. 1; CAA80513." evidence="5" ref="1">
    <original>E</original>
    <variation>Q</variation>
    <location>
        <position position="94"/>
    </location>
</feature>
<feature type="sequence conflict" description="In Ref. 1; CAA80513." evidence="5" ref="1">
    <original>L</original>
    <variation>V</variation>
    <location>
        <position position="116"/>
    </location>
</feature>
<feature type="sequence conflict" description="In Ref. 1; CAA80513." evidence="5" ref="1">
    <original>GG</original>
    <variation>SA</variation>
    <location>
        <begin position="127"/>
        <end position="128"/>
    </location>
</feature>
<feature type="sequence conflict" description="In Ref. 1; CAA80513." evidence="5" ref="1">
    <original>CEL</original>
    <variation>SEI</variation>
    <location>
        <begin position="140"/>
        <end position="142"/>
    </location>
</feature>
<feature type="sequence conflict" description="In Ref. 1; CAA80513." evidence="5" ref="1">
    <original>V</original>
    <variation>L</variation>
    <location>
        <position position="148"/>
    </location>
</feature>
<feature type="sequence conflict" description="In Ref. 1; CAA80513." evidence="5" ref="1">
    <original>Q</original>
    <variation>S</variation>
    <location>
        <position position="152"/>
    </location>
</feature>
<feature type="sequence conflict" description="In Ref. 1; CAA80513." evidence="5" ref="1">
    <original>D</original>
    <variation>E</variation>
    <location>
        <position position="161"/>
    </location>
</feature>
<feature type="sequence conflict" description="In Ref. 1; CAA80513." evidence="5" ref="1">
    <original>L</original>
    <variation>S</variation>
    <location>
        <position position="180"/>
    </location>
</feature>
<feature type="sequence conflict" description="In Ref. 1; CAA80513." evidence="5" ref="1">
    <original>VA</original>
    <variation>IT</variation>
    <location>
        <begin position="207"/>
        <end position="208"/>
    </location>
</feature>
<feature type="sequence conflict" description="In Ref. 1; CAA80513." evidence="5" ref="1">
    <original>A</original>
    <variation>E</variation>
    <location>
        <position position="249"/>
    </location>
</feature>
<feature type="sequence conflict" description="In Ref. 1; CAA80513." evidence="5" ref="1">
    <original>D</original>
    <variation>E</variation>
    <location>
        <position position="265"/>
    </location>
</feature>
<gene>
    <name type="primary">TRYP6</name>
    <name type="ORF">AGAP008290</name>
</gene>
<reference key="1">
    <citation type="journal article" date="1995" name="Exp. Parasitol.">
        <title>Constitutive and blood meal-induced trypsin genes in Anopheles gambiae.</title>
        <authorList>
            <person name="Mueller H.-M."/>
            <person name="Catteruccia F."/>
            <person name="Vizioli J."/>
            <person name="della Torre A."/>
            <person name="Crisanti A."/>
        </authorList>
    </citation>
    <scope>NUCLEOTIDE SEQUENCE [GENOMIC DNA]</scope>
    <scope>FUNCTION</scope>
    <scope>SUBCELLULAR LOCATION</scope>
    <scope>TISSUE SPECIFICITY</scope>
    <source>
        <strain>Suakoko</strain>
        <tissue>Midgut</tissue>
    </source>
</reference>
<reference key="2">
    <citation type="journal article" date="2002" name="Science">
        <title>The genome sequence of the malaria mosquito Anopheles gambiae.</title>
        <authorList>
            <person name="Holt R.A."/>
            <person name="Subramanian G.M."/>
            <person name="Halpern A."/>
            <person name="Sutton G.G."/>
            <person name="Charlab R."/>
            <person name="Nusskern D.R."/>
            <person name="Wincker P."/>
            <person name="Clark A.G."/>
            <person name="Ribeiro J.M.C."/>
            <person name="Wides R."/>
            <person name="Salzberg S.L."/>
            <person name="Loftus B.J."/>
            <person name="Yandell M.D."/>
            <person name="Majoros W.H."/>
            <person name="Rusch D.B."/>
            <person name="Lai Z."/>
            <person name="Kraft C.L."/>
            <person name="Abril J.F."/>
            <person name="Anthouard V."/>
            <person name="Arensburger P."/>
            <person name="Atkinson P.W."/>
            <person name="Baden H."/>
            <person name="de Berardinis V."/>
            <person name="Baldwin D."/>
            <person name="Benes V."/>
            <person name="Biedler J."/>
            <person name="Blass C."/>
            <person name="Bolanos R."/>
            <person name="Boscus D."/>
            <person name="Barnstead M."/>
            <person name="Cai S."/>
            <person name="Center A."/>
            <person name="Chaturverdi K."/>
            <person name="Christophides G.K."/>
            <person name="Chrystal M.A.M."/>
            <person name="Clamp M."/>
            <person name="Cravchik A."/>
            <person name="Curwen V."/>
            <person name="Dana A."/>
            <person name="Delcher A."/>
            <person name="Dew I."/>
            <person name="Evans C.A."/>
            <person name="Flanigan M."/>
            <person name="Grundschober-Freimoser A."/>
            <person name="Friedli L."/>
            <person name="Gu Z."/>
            <person name="Guan P."/>
            <person name="Guigo R."/>
            <person name="Hillenmeyer M.E."/>
            <person name="Hladun S.L."/>
            <person name="Hogan J.R."/>
            <person name="Hong Y.S."/>
            <person name="Hoover J."/>
            <person name="Jaillon O."/>
            <person name="Ke Z."/>
            <person name="Kodira C.D."/>
            <person name="Kokoza E."/>
            <person name="Koutsos A."/>
            <person name="Letunic I."/>
            <person name="Levitsky A.A."/>
            <person name="Liang Y."/>
            <person name="Lin J.-J."/>
            <person name="Lobo N.F."/>
            <person name="Lopez J.R."/>
            <person name="Malek J.A."/>
            <person name="McIntosh T.C."/>
            <person name="Meister S."/>
            <person name="Miller J.R."/>
            <person name="Mobarry C."/>
            <person name="Mongin E."/>
            <person name="Murphy S.D."/>
            <person name="O'Brochta D.A."/>
            <person name="Pfannkoch C."/>
            <person name="Qi R."/>
            <person name="Regier M.A."/>
            <person name="Remington K."/>
            <person name="Shao H."/>
            <person name="Sharakhova M.V."/>
            <person name="Sitter C.D."/>
            <person name="Shetty J."/>
            <person name="Smith T.J."/>
            <person name="Strong R."/>
            <person name="Sun J."/>
            <person name="Thomasova D."/>
            <person name="Ton L.Q."/>
            <person name="Topalis P."/>
            <person name="Tu Z.J."/>
            <person name="Unger M.F."/>
            <person name="Walenz B."/>
            <person name="Wang A.H."/>
            <person name="Wang J."/>
            <person name="Wang M."/>
            <person name="Wang X."/>
            <person name="Woodford K.J."/>
            <person name="Wortman J.R."/>
            <person name="Wu M."/>
            <person name="Yao A."/>
            <person name="Zdobnov E.M."/>
            <person name="Zhang H."/>
            <person name="Zhao Q."/>
            <person name="Zhao S."/>
            <person name="Zhu S.C."/>
            <person name="Zhimulev I."/>
            <person name="Coluzzi M."/>
            <person name="della Torre A."/>
            <person name="Roth C.W."/>
            <person name="Louis C."/>
            <person name="Kalush F."/>
            <person name="Mural R.J."/>
            <person name="Myers E.W."/>
            <person name="Adams M.D."/>
            <person name="Smith H.O."/>
            <person name="Broder S."/>
            <person name="Gardner M.J."/>
            <person name="Fraser C.M."/>
            <person name="Birney E."/>
            <person name="Bork P."/>
            <person name="Brey P.T."/>
            <person name="Venter J.C."/>
            <person name="Weissenbach J."/>
            <person name="Kafatos F.C."/>
            <person name="Collins F.H."/>
            <person name="Hoffman S.L."/>
        </authorList>
    </citation>
    <scope>NUCLEOTIDE SEQUENCE [LARGE SCALE GENOMIC DNA]</scope>
    <source>
        <strain>PEST</strain>
    </source>
</reference>
<accession>P35040</accession>
<accession>Q7Q492</accession>
<proteinExistence type="evidence at transcript level"/>
<keyword id="KW-0165">Cleavage on pair of basic residues</keyword>
<keyword id="KW-0222">Digestion</keyword>
<keyword id="KW-1015">Disulfide bond</keyword>
<keyword id="KW-0378">Hydrolase</keyword>
<keyword id="KW-0645">Protease</keyword>
<keyword id="KW-1185">Reference proteome</keyword>
<keyword id="KW-0964">Secreted</keyword>
<keyword id="KW-0720">Serine protease</keyword>
<keyword id="KW-0732">Signal</keyword>
<keyword id="KW-0865">Zymogen</keyword>
<protein>
    <recommendedName>
        <fullName>Trypsin-6</fullName>
        <ecNumber>3.4.21.4</ecNumber>
    </recommendedName>
</protein>
<evidence type="ECO:0000250" key="1"/>
<evidence type="ECO:0000255" key="2"/>
<evidence type="ECO:0000255" key="3">
    <source>
        <dbReference type="PROSITE-ProRule" id="PRU00274"/>
    </source>
</evidence>
<evidence type="ECO:0000269" key="4">
    <source>
    </source>
</evidence>
<evidence type="ECO:0000305" key="5"/>
<dbReference type="EC" id="3.4.21.4"/>
<dbReference type="EMBL" id="Z22930">
    <property type="protein sequence ID" value="CAA80513.1"/>
    <property type="molecule type" value="Genomic_DNA"/>
</dbReference>
<dbReference type="EMBL" id="AAAB01008964">
    <property type="protein sequence ID" value="EAA12587.2"/>
    <property type="molecule type" value="Genomic_DNA"/>
</dbReference>
<dbReference type="PIR" id="S40003">
    <property type="entry name" value="S40003"/>
</dbReference>
<dbReference type="RefSeq" id="XP_317175.2">
    <property type="nucleotide sequence ID" value="XM_317175.2"/>
</dbReference>
<dbReference type="SMR" id="P35040"/>
<dbReference type="FunCoup" id="P35040">
    <property type="interactions" value="55"/>
</dbReference>
<dbReference type="STRING" id="7165.P35040"/>
<dbReference type="MEROPS" id="S01.130"/>
<dbReference type="PaxDb" id="7165-AGAP008290-PA"/>
<dbReference type="EnsemblMetazoa" id="AGAP008290-RA">
    <property type="protein sequence ID" value="AGAP008290-PA"/>
    <property type="gene ID" value="AGAP008290"/>
</dbReference>
<dbReference type="GeneID" id="1277692"/>
<dbReference type="KEGG" id="aga:1277692"/>
<dbReference type="VEuPathDB" id="VectorBase:AGAMI1_009859"/>
<dbReference type="VEuPathDB" id="VectorBase:AGAP008290"/>
<dbReference type="eggNOG" id="KOG3627">
    <property type="taxonomic scope" value="Eukaryota"/>
</dbReference>
<dbReference type="HOGENOM" id="CLU_006842_7_0_1"/>
<dbReference type="InParanoid" id="P35040"/>
<dbReference type="OMA" id="WSHECAL"/>
<dbReference type="PhylomeDB" id="P35040"/>
<dbReference type="Proteomes" id="UP000007062">
    <property type="component" value="Chromosome 3R"/>
</dbReference>
<dbReference type="GO" id="GO:0005576">
    <property type="term" value="C:extracellular region"/>
    <property type="evidence" value="ECO:0007669"/>
    <property type="project" value="UniProtKB-SubCell"/>
</dbReference>
<dbReference type="GO" id="GO:0004252">
    <property type="term" value="F:serine-type endopeptidase activity"/>
    <property type="evidence" value="ECO:0000318"/>
    <property type="project" value="GO_Central"/>
</dbReference>
<dbReference type="GO" id="GO:0007586">
    <property type="term" value="P:digestion"/>
    <property type="evidence" value="ECO:0007669"/>
    <property type="project" value="UniProtKB-KW"/>
</dbReference>
<dbReference type="GO" id="GO:0006508">
    <property type="term" value="P:proteolysis"/>
    <property type="evidence" value="ECO:0007669"/>
    <property type="project" value="UniProtKB-KW"/>
</dbReference>
<dbReference type="CDD" id="cd00190">
    <property type="entry name" value="Tryp_SPc"/>
    <property type="match status" value="1"/>
</dbReference>
<dbReference type="FunFam" id="2.40.10.10:FF:000077">
    <property type="entry name" value="Predicted protein"/>
    <property type="match status" value="1"/>
</dbReference>
<dbReference type="Gene3D" id="2.40.10.10">
    <property type="entry name" value="Trypsin-like serine proteases"/>
    <property type="match status" value="1"/>
</dbReference>
<dbReference type="InterPro" id="IPR050430">
    <property type="entry name" value="Peptidase_S1"/>
</dbReference>
<dbReference type="InterPro" id="IPR009003">
    <property type="entry name" value="Peptidase_S1_PA"/>
</dbReference>
<dbReference type="InterPro" id="IPR043504">
    <property type="entry name" value="Peptidase_S1_PA_chymotrypsin"/>
</dbReference>
<dbReference type="InterPro" id="IPR001314">
    <property type="entry name" value="Peptidase_S1A"/>
</dbReference>
<dbReference type="InterPro" id="IPR001254">
    <property type="entry name" value="Trypsin_dom"/>
</dbReference>
<dbReference type="InterPro" id="IPR018114">
    <property type="entry name" value="TRYPSIN_HIS"/>
</dbReference>
<dbReference type="PANTHER" id="PTHR24276:SF97">
    <property type="entry name" value="GH13245P2-RELATED"/>
    <property type="match status" value="1"/>
</dbReference>
<dbReference type="PANTHER" id="PTHR24276">
    <property type="entry name" value="POLYSERASE-RELATED"/>
    <property type="match status" value="1"/>
</dbReference>
<dbReference type="Pfam" id="PF00089">
    <property type="entry name" value="Trypsin"/>
    <property type="match status" value="1"/>
</dbReference>
<dbReference type="PRINTS" id="PR00722">
    <property type="entry name" value="CHYMOTRYPSIN"/>
</dbReference>
<dbReference type="SMART" id="SM00020">
    <property type="entry name" value="Tryp_SPc"/>
    <property type="match status" value="1"/>
</dbReference>
<dbReference type="SUPFAM" id="SSF50494">
    <property type="entry name" value="Trypsin-like serine proteases"/>
    <property type="match status" value="1"/>
</dbReference>
<dbReference type="PROSITE" id="PS50240">
    <property type="entry name" value="TRYPSIN_DOM"/>
    <property type="match status" value="1"/>
</dbReference>
<dbReference type="PROSITE" id="PS00134">
    <property type="entry name" value="TRYPSIN_HIS"/>
    <property type="match status" value="1"/>
</dbReference>